<reference key="1">
    <citation type="journal article" date="2007" name="Proc. Natl. Acad. Sci. U.S.A.">
        <title>The tiny eukaryote Ostreococcus provides genomic insights into the paradox of plankton speciation.</title>
        <authorList>
            <person name="Palenik B."/>
            <person name="Grimwood J."/>
            <person name="Aerts A."/>
            <person name="Rouze P."/>
            <person name="Salamov A."/>
            <person name="Putnam N."/>
            <person name="Dupont C."/>
            <person name="Jorgensen R."/>
            <person name="Derelle E."/>
            <person name="Rombauts S."/>
            <person name="Zhou K."/>
            <person name="Otillar R."/>
            <person name="Merchant S.S."/>
            <person name="Podell S."/>
            <person name="Gaasterland T."/>
            <person name="Napoli C."/>
            <person name="Gendler K."/>
            <person name="Manuell A."/>
            <person name="Tai V."/>
            <person name="Vallon O."/>
            <person name="Piganeau G."/>
            <person name="Jancek S."/>
            <person name="Heijde M."/>
            <person name="Jabbari K."/>
            <person name="Bowler C."/>
            <person name="Lohr M."/>
            <person name="Robbens S."/>
            <person name="Werner G."/>
            <person name="Dubchak I."/>
            <person name="Pazour G.J."/>
            <person name="Ren Q."/>
            <person name="Paulsen I."/>
            <person name="Delwiche C."/>
            <person name="Schmutz J."/>
            <person name="Rokhsar D."/>
            <person name="Van de Peer Y."/>
            <person name="Moreau H."/>
            <person name="Grigoriev I.V."/>
        </authorList>
    </citation>
    <scope>NUCLEOTIDE SEQUENCE [LARGE SCALE GENOMIC DNA]</scope>
    <source>
        <strain>CCE9901</strain>
    </source>
</reference>
<comment type="function">
    <text evidence="1">Catalyzes the attachment of alanine to tRNA(Ala) in a two-step reaction: alanine is first activated by ATP to form Ala-AMP and then transferred to the acceptor end of tRNA(Ala). Also edits incorrectly charged tRNA(Ala) via its editing domain.</text>
</comment>
<comment type="catalytic activity">
    <reaction evidence="1">
        <text>tRNA(Ala) + L-alanine + ATP = L-alanyl-tRNA(Ala) + AMP + diphosphate</text>
        <dbReference type="Rhea" id="RHEA:12540"/>
        <dbReference type="Rhea" id="RHEA-COMP:9657"/>
        <dbReference type="Rhea" id="RHEA-COMP:9923"/>
        <dbReference type="ChEBI" id="CHEBI:30616"/>
        <dbReference type="ChEBI" id="CHEBI:33019"/>
        <dbReference type="ChEBI" id="CHEBI:57972"/>
        <dbReference type="ChEBI" id="CHEBI:78442"/>
        <dbReference type="ChEBI" id="CHEBI:78497"/>
        <dbReference type="ChEBI" id="CHEBI:456215"/>
        <dbReference type="EC" id="6.1.1.7"/>
    </reaction>
</comment>
<comment type="cofactor">
    <cofactor evidence="1">
        <name>Zn(2+)</name>
        <dbReference type="ChEBI" id="CHEBI:29105"/>
    </cofactor>
    <text evidence="1">Binds 1 zinc ion per subunit.</text>
</comment>
<comment type="subunit">
    <text evidence="1">Monomer.</text>
</comment>
<comment type="subcellular location">
    <subcellularLocation>
        <location evidence="1">Plastid</location>
        <location evidence="1">Chloroplast</location>
    </subcellularLocation>
    <subcellularLocation>
        <location evidence="1">Mitochondrion</location>
    </subcellularLocation>
</comment>
<comment type="domain">
    <text evidence="1">Consists of three domains; the N-terminal catalytic domain, the editing domain and the C-terminal C-Ala domain. The editing domain removes incorrectly charged amino acids, while the C-Ala domain, along with tRNA(Ala), serves as a bridge to cooperatively bring together the editing and aminoacylation centers thus stimulating deacylation of misacylated tRNAs.</text>
</comment>
<comment type="similarity">
    <text evidence="1">Belongs to the class-II aminoacyl-tRNA synthetase family.</text>
</comment>
<organism>
    <name type="scientific">Ostreococcus lucimarinus (strain CCE9901)</name>
    <dbReference type="NCBI Taxonomy" id="436017"/>
    <lineage>
        <taxon>Eukaryota</taxon>
        <taxon>Viridiplantae</taxon>
        <taxon>Chlorophyta</taxon>
        <taxon>Mamiellophyceae</taxon>
        <taxon>Mamiellales</taxon>
        <taxon>Bathycoccaceae</taxon>
        <taxon>Ostreococcus</taxon>
    </lineage>
</organism>
<protein>
    <recommendedName>
        <fullName evidence="1">Alanine--tRNA ligase, chloroplastic/mitochondrial</fullName>
        <ecNumber evidence="1">6.1.1.7</ecNumber>
    </recommendedName>
    <alternativeName>
        <fullName evidence="1">Alanyl-tRNA synthetase</fullName>
        <shortName evidence="1">AlaRS</shortName>
    </alternativeName>
</protein>
<name>SYAP_OSTLU</name>
<sequence length="906" mass="96478">MSAATERERLTNANPNARGKDNSGAAIRQRFLKFYETRGHAVLPSSSLVPEDPTVLLTIAGMLQFKPVFMGQRERAHERATTTQKCVRTNDIENVGVTARHHTFFEMLGNFSFGDYFKKDACQWAWELATGEFGLNPERVWVSVFREDDEAFAIWRDVVGVPESRIKRMDEKDNFWAAGPTGPCGPCSELYYDFYPERGLEGADLDDDSRFIEFYNLVFMELNRDADGGVTPLKNKNIDTGMGLERMAQILQGVPNNYETDLIMPIINKAASMAGIDYNACNDVQKQQLKVIGDHTRAVSYMISDGVFASNIGRGYIVRRLLRRVVRNGRLLGIKPEEGASAFTPAIAEVAISMSEGCDPQVAKNSARILAELEREELSFQKTLGRGEEMLAELIETAKKTKTGLSGKDAFTLYDTYGFPLDITADVATEAGITVDLEGFESAMAEQRSMSQAAHQTVDVTAGNALARVADELGAKSTFIGYESTSSDVSNVLAIVCGGESVEEAPEGAKVDIVLDVTPFYAESGGQVGDNGVLHTADGATLEVSDVQKAGGGRIIVHTATVTKGSIKKGSQVTANVDENSRRRAKSNHTATHLLQSALKKVLGEDVSQAGSLCGFDRLRFDFNSPKAPTEAQLLEVENLVNGWISQSAALTAEEMPIAAAKDKGATMMFGEKYGDVVRVVDVPGISMELCGGTHVSNTAEIGGFKILSEAGIASGIRRIEAVAGAGVVELLQQRDAVVKQLASALRVPPEEITGRVSSLQEDLRATQKLAESLRGELAVAKAGALVSQAREVGEAKVLVARLDGVDPAALKVAAENLAAQLGDGAAIVLGSANGANVGLVALFDDKVQKDGGLKAGQVLGAAAKKCGGGGGGKPGFAQAGGRDATQLDAALDEALTTVTAALSPK</sequence>
<keyword id="KW-0030">Aminoacyl-tRNA synthetase</keyword>
<keyword id="KW-0067">ATP-binding</keyword>
<keyword id="KW-0150">Chloroplast</keyword>
<keyword id="KW-0436">Ligase</keyword>
<keyword id="KW-0479">Metal-binding</keyword>
<keyword id="KW-0496">Mitochondrion</keyword>
<keyword id="KW-0547">Nucleotide-binding</keyword>
<keyword id="KW-0934">Plastid</keyword>
<keyword id="KW-0648">Protein biosynthesis</keyword>
<keyword id="KW-1185">Reference proteome</keyword>
<keyword id="KW-0694">RNA-binding</keyword>
<keyword id="KW-0809">Transit peptide</keyword>
<keyword id="KW-0820">tRNA-binding</keyword>
<keyword id="KW-0862">Zinc</keyword>
<evidence type="ECO:0000255" key="1">
    <source>
        <dbReference type="HAMAP-Rule" id="MF_03134"/>
    </source>
</evidence>
<evidence type="ECO:0000256" key="2">
    <source>
        <dbReference type="SAM" id="MobiDB-lite"/>
    </source>
</evidence>
<feature type="transit peptide" description="Chloroplast and mitochondrion">
    <location>
        <begin position="1"/>
        <end status="unknown"/>
    </location>
</feature>
<feature type="chain" id="PRO_0000402307" description="Alanine--tRNA ligase, chloroplastic/mitochondrial">
    <location>
        <begin status="unknown"/>
        <end position="906"/>
    </location>
</feature>
<feature type="region of interest" description="Disordered" evidence="2">
    <location>
        <begin position="1"/>
        <end position="22"/>
    </location>
</feature>
<feature type="compositionally biased region" description="Basic and acidic residues" evidence="2">
    <location>
        <begin position="1"/>
        <end position="10"/>
    </location>
</feature>
<feature type="binding site" evidence="1">
    <location>
        <position position="589"/>
    </location>
    <ligand>
        <name>Zn(2+)</name>
        <dbReference type="ChEBI" id="CHEBI:29105"/>
    </ligand>
</feature>
<feature type="binding site" evidence="1">
    <location>
        <position position="593"/>
    </location>
    <ligand>
        <name>Zn(2+)</name>
        <dbReference type="ChEBI" id="CHEBI:29105"/>
    </ligand>
</feature>
<feature type="binding site" evidence="1">
    <location>
        <position position="691"/>
    </location>
    <ligand>
        <name>Zn(2+)</name>
        <dbReference type="ChEBI" id="CHEBI:29105"/>
    </ligand>
</feature>
<feature type="binding site" evidence="1">
    <location>
        <position position="695"/>
    </location>
    <ligand>
        <name>Zn(2+)</name>
        <dbReference type="ChEBI" id="CHEBI:29105"/>
    </ligand>
</feature>
<accession>A4S051</accession>
<proteinExistence type="inferred from homology"/>
<gene>
    <name type="ORF">OSTLU_32618</name>
</gene>
<dbReference type="EC" id="6.1.1.7" evidence="1"/>
<dbReference type="EMBL" id="CP000587">
    <property type="protein sequence ID" value="ABO97206.1"/>
    <property type="molecule type" value="Genomic_DNA"/>
</dbReference>
<dbReference type="RefSeq" id="XP_001418913.1">
    <property type="nucleotide sequence ID" value="XM_001418876.1"/>
</dbReference>
<dbReference type="SMR" id="A4S051"/>
<dbReference type="STRING" id="436017.A4S051"/>
<dbReference type="EnsemblPlants" id="ABO97206">
    <property type="protein sequence ID" value="ABO97206"/>
    <property type="gene ID" value="OSTLU_32618"/>
</dbReference>
<dbReference type="GeneID" id="5002757"/>
<dbReference type="Gramene" id="ABO97206">
    <property type="protein sequence ID" value="ABO97206"/>
    <property type="gene ID" value="OSTLU_32618"/>
</dbReference>
<dbReference type="KEGG" id="olu:OSTLU_32618"/>
<dbReference type="eggNOG" id="KOG0188">
    <property type="taxonomic scope" value="Eukaryota"/>
</dbReference>
<dbReference type="HOGENOM" id="CLU_004485_1_0_1"/>
<dbReference type="OMA" id="GFDMEME"/>
<dbReference type="OrthoDB" id="2423964at2759"/>
<dbReference type="Proteomes" id="UP000001568">
    <property type="component" value="Chromosome 7"/>
</dbReference>
<dbReference type="GO" id="GO:0009507">
    <property type="term" value="C:chloroplast"/>
    <property type="evidence" value="ECO:0007669"/>
    <property type="project" value="UniProtKB-SubCell"/>
</dbReference>
<dbReference type="GO" id="GO:0005829">
    <property type="term" value="C:cytosol"/>
    <property type="evidence" value="ECO:0007669"/>
    <property type="project" value="TreeGrafter"/>
</dbReference>
<dbReference type="GO" id="GO:0005739">
    <property type="term" value="C:mitochondrion"/>
    <property type="evidence" value="ECO:0007669"/>
    <property type="project" value="UniProtKB-SubCell"/>
</dbReference>
<dbReference type="GO" id="GO:0004813">
    <property type="term" value="F:alanine-tRNA ligase activity"/>
    <property type="evidence" value="ECO:0007669"/>
    <property type="project" value="UniProtKB-UniRule"/>
</dbReference>
<dbReference type="GO" id="GO:0002161">
    <property type="term" value="F:aminoacyl-tRNA deacylase activity"/>
    <property type="evidence" value="ECO:0007669"/>
    <property type="project" value="TreeGrafter"/>
</dbReference>
<dbReference type="GO" id="GO:0005524">
    <property type="term" value="F:ATP binding"/>
    <property type="evidence" value="ECO:0007669"/>
    <property type="project" value="UniProtKB-UniRule"/>
</dbReference>
<dbReference type="GO" id="GO:0000049">
    <property type="term" value="F:tRNA binding"/>
    <property type="evidence" value="ECO:0007669"/>
    <property type="project" value="UniProtKB-KW"/>
</dbReference>
<dbReference type="GO" id="GO:0008270">
    <property type="term" value="F:zinc ion binding"/>
    <property type="evidence" value="ECO:0007669"/>
    <property type="project" value="UniProtKB-UniRule"/>
</dbReference>
<dbReference type="GO" id="GO:0006419">
    <property type="term" value="P:alanyl-tRNA aminoacylation"/>
    <property type="evidence" value="ECO:0007669"/>
    <property type="project" value="UniProtKB-UniRule"/>
</dbReference>
<dbReference type="CDD" id="cd00673">
    <property type="entry name" value="AlaRS_core"/>
    <property type="match status" value="1"/>
</dbReference>
<dbReference type="FunFam" id="2.40.30.130:FF:000001">
    <property type="entry name" value="Alanine--tRNA ligase"/>
    <property type="match status" value="1"/>
</dbReference>
<dbReference type="FunFam" id="3.10.310.40:FF:000001">
    <property type="entry name" value="Alanine--tRNA ligase"/>
    <property type="match status" value="1"/>
</dbReference>
<dbReference type="FunFam" id="3.30.54.20:FF:000001">
    <property type="entry name" value="Alanine--tRNA ligase"/>
    <property type="match status" value="1"/>
</dbReference>
<dbReference type="FunFam" id="3.30.930.10:FF:000004">
    <property type="entry name" value="Alanine--tRNA ligase"/>
    <property type="match status" value="1"/>
</dbReference>
<dbReference type="FunFam" id="3.30.980.10:FF:000004">
    <property type="entry name" value="Alanine--tRNA ligase, cytoplasmic"/>
    <property type="match status" value="1"/>
</dbReference>
<dbReference type="Gene3D" id="2.40.30.130">
    <property type="match status" value="1"/>
</dbReference>
<dbReference type="Gene3D" id="3.10.310.40">
    <property type="match status" value="1"/>
</dbReference>
<dbReference type="Gene3D" id="3.30.54.20">
    <property type="match status" value="1"/>
</dbReference>
<dbReference type="Gene3D" id="6.10.250.550">
    <property type="match status" value="1"/>
</dbReference>
<dbReference type="Gene3D" id="3.30.930.10">
    <property type="entry name" value="Bira Bifunctional Protein, Domain 2"/>
    <property type="match status" value="1"/>
</dbReference>
<dbReference type="Gene3D" id="3.30.980.10">
    <property type="entry name" value="Threonyl-trna Synthetase, Chain A, domain 2"/>
    <property type="match status" value="1"/>
</dbReference>
<dbReference type="HAMAP" id="MF_00036_B">
    <property type="entry name" value="Ala_tRNA_synth_B"/>
    <property type="match status" value="1"/>
</dbReference>
<dbReference type="HAMAP" id="MF_03134">
    <property type="entry name" value="Ala_tRNA_synth_plantC"/>
    <property type="match status" value="1"/>
</dbReference>
<dbReference type="InterPro" id="IPR045864">
    <property type="entry name" value="aa-tRNA-synth_II/BPL/LPL"/>
</dbReference>
<dbReference type="InterPro" id="IPR002318">
    <property type="entry name" value="Ala-tRNA-lgiase_IIc"/>
</dbReference>
<dbReference type="InterPro" id="IPR018162">
    <property type="entry name" value="Ala-tRNA-ligase_IIc_anticod-bd"/>
</dbReference>
<dbReference type="InterPro" id="IPR018165">
    <property type="entry name" value="Ala-tRNA-synth_IIc_core"/>
</dbReference>
<dbReference type="InterPro" id="IPR018164">
    <property type="entry name" value="Ala-tRNA-synth_IIc_N"/>
</dbReference>
<dbReference type="InterPro" id="IPR050058">
    <property type="entry name" value="Ala-tRNA_ligase"/>
</dbReference>
<dbReference type="InterPro" id="IPR023033">
    <property type="entry name" value="Ala_tRNA_ligase_euk/bac"/>
</dbReference>
<dbReference type="InterPro" id="IPR027522">
    <property type="entry name" value="Ala_tRNA_synth_plant"/>
</dbReference>
<dbReference type="InterPro" id="IPR003156">
    <property type="entry name" value="DHHA1_dom"/>
</dbReference>
<dbReference type="InterPro" id="IPR018163">
    <property type="entry name" value="Thr/Ala-tRNA-synth_IIc_edit"/>
</dbReference>
<dbReference type="InterPro" id="IPR009000">
    <property type="entry name" value="Transl_B-barrel_sf"/>
</dbReference>
<dbReference type="InterPro" id="IPR012947">
    <property type="entry name" value="tRNA_SAD"/>
</dbReference>
<dbReference type="NCBIfam" id="TIGR00344">
    <property type="entry name" value="alaS"/>
    <property type="match status" value="1"/>
</dbReference>
<dbReference type="PANTHER" id="PTHR11777:SF9">
    <property type="entry name" value="ALANINE--TRNA LIGASE, CYTOPLASMIC"/>
    <property type="match status" value="1"/>
</dbReference>
<dbReference type="PANTHER" id="PTHR11777">
    <property type="entry name" value="ALANYL-TRNA SYNTHETASE"/>
    <property type="match status" value="1"/>
</dbReference>
<dbReference type="Pfam" id="PF02272">
    <property type="entry name" value="DHHA1"/>
    <property type="match status" value="1"/>
</dbReference>
<dbReference type="Pfam" id="PF01411">
    <property type="entry name" value="tRNA-synt_2c"/>
    <property type="match status" value="1"/>
</dbReference>
<dbReference type="Pfam" id="PF07973">
    <property type="entry name" value="tRNA_SAD"/>
    <property type="match status" value="1"/>
</dbReference>
<dbReference type="PRINTS" id="PR00980">
    <property type="entry name" value="TRNASYNTHALA"/>
</dbReference>
<dbReference type="SMART" id="SM00863">
    <property type="entry name" value="tRNA_SAD"/>
    <property type="match status" value="1"/>
</dbReference>
<dbReference type="SUPFAM" id="SSF55681">
    <property type="entry name" value="Class II aaRS and biotin synthetases"/>
    <property type="match status" value="1"/>
</dbReference>
<dbReference type="SUPFAM" id="SSF101353">
    <property type="entry name" value="Putative anticodon-binding domain of alanyl-tRNA synthetase (AlaRS)"/>
    <property type="match status" value="1"/>
</dbReference>
<dbReference type="SUPFAM" id="SSF55186">
    <property type="entry name" value="ThrRS/AlaRS common domain"/>
    <property type="match status" value="1"/>
</dbReference>
<dbReference type="SUPFAM" id="SSF50447">
    <property type="entry name" value="Translation proteins"/>
    <property type="match status" value="1"/>
</dbReference>
<dbReference type="PROSITE" id="PS50860">
    <property type="entry name" value="AA_TRNA_LIGASE_II_ALA"/>
    <property type="match status" value="1"/>
</dbReference>